<accession>Q35425</accession>
<comment type="function">
    <text evidence="2">Component of the ubiquinol-cytochrome c reductase complex (complex III or cytochrome b-c1 complex) that is part of the mitochondrial respiratory chain. The b-c1 complex mediates electron transfer from ubiquinol to cytochrome c. Contributes to the generation of a proton gradient across the mitochondrial membrane that is then used for ATP synthesis.</text>
</comment>
<comment type="cofactor">
    <cofactor evidence="2">
        <name>heme b</name>
        <dbReference type="ChEBI" id="CHEBI:60344"/>
    </cofactor>
    <text evidence="2">Binds 2 heme b groups non-covalently.</text>
</comment>
<comment type="subunit">
    <text evidence="2">The cytochrome bc1 complex contains 11 subunits: 3 respiratory subunits (MT-CYB, CYC1 and UQCRFS1), 2 core proteins (UQCRC1 and UQCRC2) and 6 low-molecular weight proteins (UQCRH/QCR6, UQCRB/QCR7, UQCRQ/QCR8, UQCR10/QCR9, UQCR11/QCR10 and a cleavage product of UQCRFS1). This cytochrome bc1 complex then forms a dimer.</text>
</comment>
<comment type="subcellular location">
    <subcellularLocation>
        <location evidence="2">Mitochondrion inner membrane</location>
        <topology evidence="2">Multi-pass membrane protein</topology>
    </subcellularLocation>
</comment>
<comment type="miscellaneous">
    <text evidence="1">Heme 1 (or BL or b562) is low-potential and absorbs at about 562 nm, and heme 2 (or BH or b566) is high-potential and absorbs at about 566 nm.</text>
</comment>
<comment type="similarity">
    <text evidence="3 4">Belongs to the cytochrome b family.</text>
</comment>
<comment type="caution">
    <text evidence="2">The full-length protein contains only eight transmembrane helices, not nine as predicted by bioinformatics tools.</text>
</comment>
<dbReference type="EMBL" id="M99462">
    <property type="protein sequence ID" value="AAB61692.1"/>
    <property type="molecule type" value="Genomic_DNA"/>
</dbReference>
<dbReference type="SMR" id="Q35425"/>
<dbReference type="GO" id="GO:0005743">
    <property type="term" value="C:mitochondrial inner membrane"/>
    <property type="evidence" value="ECO:0007669"/>
    <property type="project" value="UniProtKB-SubCell"/>
</dbReference>
<dbReference type="GO" id="GO:0045275">
    <property type="term" value="C:respiratory chain complex III"/>
    <property type="evidence" value="ECO:0007669"/>
    <property type="project" value="InterPro"/>
</dbReference>
<dbReference type="GO" id="GO:0046872">
    <property type="term" value="F:metal ion binding"/>
    <property type="evidence" value="ECO:0007669"/>
    <property type="project" value="UniProtKB-KW"/>
</dbReference>
<dbReference type="GO" id="GO:0008121">
    <property type="term" value="F:ubiquinol-cytochrome-c reductase activity"/>
    <property type="evidence" value="ECO:0007669"/>
    <property type="project" value="InterPro"/>
</dbReference>
<dbReference type="GO" id="GO:0006122">
    <property type="term" value="P:mitochondrial electron transport, ubiquinol to cytochrome c"/>
    <property type="evidence" value="ECO:0007669"/>
    <property type="project" value="TreeGrafter"/>
</dbReference>
<dbReference type="CDD" id="cd00290">
    <property type="entry name" value="cytochrome_b_C"/>
    <property type="match status" value="1"/>
</dbReference>
<dbReference type="CDD" id="cd00284">
    <property type="entry name" value="Cytochrome_b_N"/>
    <property type="match status" value="1"/>
</dbReference>
<dbReference type="FunFam" id="1.20.810.10:FF:000002">
    <property type="entry name" value="Cytochrome b"/>
    <property type="match status" value="1"/>
</dbReference>
<dbReference type="Gene3D" id="1.20.810.10">
    <property type="entry name" value="Cytochrome Bc1 Complex, Chain C"/>
    <property type="match status" value="1"/>
</dbReference>
<dbReference type="InterPro" id="IPR005798">
    <property type="entry name" value="Cyt_b/b6_C"/>
</dbReference>
<dbReference type="InterPro" id="IPR036150">
    <property type="entry name" value="Cyt_b/b6_C_sf"/>
</dbReference>
<dbReference type="InterPro" id="IPR005797">
    <property type="entry name" value="Cyt_b/b6_N"/>
</dbReference>
<dbReference type="InterPro" id="IPR027387">
    <property type="entry name" value="Cytb/b6-like_sf"/>
</dbReference>
<dbReference type="InterPro" id="IPR030689">
    <property type="entry name" value="Cytochrome_b"/>
</dbReference>
<dbReference type="InterPro" id="IPR048260">
    <property type="entry name" value="Cytochrome_b_C_euk/bac"/>
</dbReference>
<dbReference type="InterPro" id="IPR048259">
    <property type="entry name" value="Cytochrome_b_N_euk/bac"/>
</dbReference>
<dbReference type="InterPro" id="IPR016174">
    <property type="entry name" value="Di-haem_cyt_TM"/>
</dbReference>
<dbReference type="PANTHER" id="PTHR19271">
    <property type="entry name" value="CYTOCHROME B"/>
    <property type="match status" value="1"/>
</dbReference>
<dbReference type="PANTHER" id="PTHR19271:SF16">
    <property type="entry name" value="CYTOCHROME B"/>
    <property type="match status" value="1"/>
</dbReference>
<dbReference type="Pfam" id="PF00032">
    <property type="entry name" value="Cytochrom_B_C"/>
    <property type="match status" value="1"/>
</dbReference>
<dbReference type="Pfam" id="PF00033">
    <property type="entry name" value="Cytochrome_B"/>
    <property type="match status" value="1"/>
</dbReference>
<dbReference type="PIRSF" id="PIRSF038885">
    <property type="entry name" value="COB"/>
    <property type="match status" value="1"/>
</dbReference>
<dbReference type="SUPFAM" id="SSF81648">
    <property type="entry name" value="a domain/subunit of cytochrome bc1 complex (Ubiquinol-cytochrome c reductase)"/>
    <property type="match status" value="1"/>
</dbReference>
<dbReference type="SUPFAM" id="SSF81342">
    <property type="entry name" value="Transmembrane di-heme cytochromes"/>
    <property type="match status" value="1"/>
</dbReference>
<dbReference type="PROSITE" id="PS51003">
    <property type="entry name" value="CYTB_CTER"/>
    <property type="match status" value="1"/>
</dbReference>
<dbReference type="PROSITE" id="PS51002">
    <property type="entry name" value="CYTB_NTER"/>
    <property type="match status" value="1"/>
</dbReference>
<geneLocation type="mitochondrion"/>
<protein>
    <recommendedName>
        <fullName>Cytochrome b</fullName>
    </recommendedName>
    <alternativeName>
        <fullName>Complex III subunit 3</fullName>
    </alternativeName>
    <alternativeName>
        <fullName>Complex III subunit III</fullName>
    </alternativeName>
    <alternativeName>
        <fullName>Cytochrome b-c1 complex subunit 3</fullName>
    </alternativeName>
    <alternativeName>
        <fullName>Ubiquinol-cytochrome-c reductase complex cytochrome b subunit</fullName>
    </alternativeName>
</protein>
<keyword id="KW-0249">Electron transport</keyword>
<keyword id="KW-0349">Heme</keyword>
<keyword id="KW-0408">Iron</keyword>
<keyword id="KW-0472">Membrane</keyword>
<keyword id="KW-0479">Metal-binding</keyword>
<keyword id="KW-0496">Mitochondrion</keyword>
<keyword id="KW-0999">Mitochondrion inner membrane</keyword>
<keyword id="KW-0679">Respiratory chain</keyword>
<keyword id="KW-0812">Transmembrane</keyword>
<keyword id="KW-1133">Transmembrane helix</keyword>
<keyword id="KW-0813">Transport</keyword>
<keyword id="KW-0830">Ubiquinone</keyword>
<name>CYB_PHADO</name>
<evidence type="ECO:0000250" key="1"/>
<evidence type="ECO:0000250" key="2">
    <source>
        <dbReference type="UniProtKB" id="P00157"/>
    </source>
</evidence>
<evidence type="ECO:0000255" key="3">
    <source>
        <dbReference type="PROSITE-ProRule" id="PRU00967"/>
    </source>
</evidence>
<evidence type="ECO:0000255" key="4">
    <source>
        <dbReference type="PROSITE-ProRule" id="PRU00968"/>
    </source>
</evidence>
<gene>
    <name type="primary">MT-CYB</name>
    <name type="synonym">COB</name>
    <name type="synonym">CYTB</name>
    <name type="synonym">MTCYB</name>
</gene>
<feature type="chain" id="PRO_0000061383" description="Cytochrome b">
    <location>
        <begin position="1"/>
        <end position="381"/>
    </location>
</feature>
<feature type="transmembrane region" description="Helical" evidence="2">
    <location>
        <begin position="33"/>
        <end position="53"/>
    </location>
</feature>
<feature type="transmembrane region" description="Helical" evidence="2">
    <location>
        <begin position="77"/>
        <end position="98"/>
    </location>
</feature>
<feature type="transmembrane region" description="Helical" evidence="2">
    <location>
        <begin position="113"/>
        <end position="133"/>
    </location>
</feature>
<feature type="transmembrane region" description="Helical" evidence="2">
    <location>
        <begin position="178"/>
        <end position="198"/>
    </location>
</feature>
<feature type="transmembrane region" description="Helical" evidence="2">
    <location>
        <begin position="226"/>
        <end position="246"/>
    </location>
</feature>
<feature type="transmembrane region" description="Helical" evidence="2">
    <location>
        <begin position="288"/>
        <end position="308"/>
    </location>
</feature>
<feature type="transmembrane region" description="Helical" evidence="2">
    <location>
        <begin position="320"/>
        <end position="340"/>
    </location>
</feature>
<feature type="transmembrane region" description="Helical" evidence="2">
    <location>
        <begin position="347"/>
        <end position="367"/>
    </location>
</feature>
<feature type="binding site" description="axial binding residue" evidence="2">
    <location>
        <position position="83"/>
    </location>
    <ligand>
        <name>heme b</name>
        <dbReference type="ChEBI" id="CHEBI:60344"/>
        <label>b562</label>
    </ligand>
    <ligandPart>
        <name>Fe</name>
        <dbReference type="ChEBI" id="CHEBI:18248"/>
    </ligandPart>
</feature>
<feature type="binding site" description="axial binding residue" evidence="2">
    <location>
        <position position="97"/>
    </location>
    <ligand>
        <name>heme b</name>
        <dbReference type="ChEBI" id="CHEBI:60344"/>
        <label>b566</label>
    </ligand>
    <ligandPart>
        <name>Fe</name>
        <dbReference type="ChEBI" id="CHEBI:18248"/>
    </ligandPart>
</feature>
<feature type="binding site" description="axial binding residue" evidence="2">
    <location>
        <position position="182"/>
    </location>
    <ligand>
        <name>heme b</name>
        <dbReference type="ChEBI" id="CHEBI:60344"/>
        <label>b562</label>
    </ligand>
    <ligandPart>
        <name>Fe</name>
        <dbReference type="ChEBI" id="CHEBI:18248"/>
    </ligandPart>
</feature>
<feature type="binding site" description="axial binding residue" evidence="2">
    <location>
        <position position="196"/>
    </location>
    <ligand>
        <name>heme b</name>
        <dbReference type="ChEBI" id="CHEBI:60344"/>
        <label>b566</label>
    </ligand>
    <ligandPart>
        <name>Fe</name>
        <dbReference type="ChEBI" id="CHEBI:18248"/>
    </ligandPart>
</feature>
<feature type="binding site" evidence="2">
    <location>
        <position position="201"/>
    </location>
    <ligand>
        <name>a ubiquinone</name>
        <dbReference type="ChEBI" id="CHEBI:16389"/>
    </ligand>
</feature>
<organism>
    <name type="scientific">Phascolosorex dorsalis</name>
    <name type="common">Narrow-striped dasyure</name>
    <dbReference type="NCBI Taxonomy" id="9295"/>
    <lineage>
        <taxon>Eukaryota</taxon>
        <taxon>Metazoa</taxon>
        <taxon>Chordata</taxon>
        <taxon>Craniata</taxon>
        <taxon>Vertebrata</taxon>
        <taxon>Euteleostomi</taxon>
        <taxon>Mammalia</taxon>
        <taxon>Metatheria</taxon>
        <taxon>Dasyuromorphia</taxon>
        <taxon>Dasyuridae</taxon>
        <taxon>Phascolosorex</taxon>
    </lineage>
</organism>
<reference key="1">
    <citation type="journal article" date="1992" name="Proc. R. Soc. B">
        <title>Phylogenetic relationships of the thylacine (Mammalia: Thylacinidae) among dasyuroid marsupials: evidence from cytochrome b DNA sequences.</title>
        <authorList>
            <person name="Krajewski C."/>
            <person name="Driskell A.C."/>
            <person name="Baverstock P.R."/>
            <person name="Braun M.J."/>
        </authorList>
    </citation>
    <scope>NUCLEOTIDE SEQUENCE [GENOMIC DNA]</scope>
</reference>
<sequence length="381" mass="42814">MINFRKTLPLLKIINHSFIDLPTPSNISAWWNFGSLLGMCLIIQILTGLFLAMHYTSDTLTAFTSVAHICRDVNYGWLLRNLHANGASMFFMCLFLHIGRGIYYGSYLYKETWNIGVILLLAVMATAFVGYVLPWGQMSFWGATVITNLLSAIPYIGPTLAEWVWGGYAVDKATLTRFFAFHFILPFIVTALAIVHLLFLHETGSNNPSGINPNADKIPFHPYYTIKDALGFMLLLSVLLLLTLFSPDSLGDPDNFSPANPLNTPPHIKPEWYFLFAYAILRSIPNKLGGVLALLASILILLIIPLLHTANQRSMMFRPISQTLFWILTANLITLTWIGGQPVEQPFIIIGQLASMLYFLLILVLMPLAGLLENYMLKPEW</sequence>
<proteinExistence type="inferred from homology"/>